<protein>
    <recommendedName>
        <fullName evidence="7">Lanosterol 14-alpha demethylase</fullName>
        <shortName evidence="7">LDM</shortName>
        <ecNumber evidence="5">1.14.14.154</ecNumber>
    </recommendedName>
    <alternativeName>
        <fullName evidence="6">Cytochrome P450 family member 51</fullName>
        <shortName evidence="6">CYP51</shortName>
    </alternativeName>
    <alternativeName>
        <fullName evidence="6">Sterol 14-alpha demethylase</fullName>
    </alternativeName>
</protein>
<keyword id="KW-0152">Cholesterol biosynthesis</keyword>
<keyword id="KW-0153">Cholesterol metabolism</keyword>
<keyword id="KW-0256">Endoplasmic reticulum</keyword>
<keyword id="KW-0349">Heme</keyword>
<keyword id="KW-0408">Iron</keyword>
<keyword id="KW-0444">Lipid biosynthesis</keyword>
<keyword id="KW-0443">Lipid metabolism</keyword>
<keyword id="KW-0472">Membrane</keyword>
<keyword id="KW-0479">Metal-binding</keyword>
<keyword id="KW-0503">Monooxygenase</keyword>
<keyword id="KW-0560">Oxidoreductase</keyword>
<keyword id="KW-1185">Reference proteome</keyword>
<keyword id="KW-0752">Steroid biosynthesis</keyword>
<keyword id="KW-0753">Steroid metabolism</keyword>
<keyword id="KW-0756">Sterol biosynthesis</keyword>
<keyword id="KW-1207">Sterol metabolism</keyword>
<keyword id="KW-0812">Transmembrane</keyword>
<keyword id="KW-1133">Transmembrane helix</keyword>
<dbReference type="EC" id="1.14.14.154" evidence="5"/>
<dbReference type="EMBL" id="AY496939">
    <property type="protein sequence ID" value="AAR89625.1"/>
    <property type="molecule type" value="mRNA"/>
</dbReference>
<dbReference type="EMBL" id="CU638710">
    <property type="status" value="NOT_ANNOTATED_CDS"/>
    <property type="molecule type" value="Genomic_DNA"/>
</dbReference>
<dbReference type="EMBL" id="BC116552">
    <property type="protein sequence ID" value="AAI16553.1"/>
    <property type="molecule type" value="mRNA"/>
</dbReference>
<dbReference type="EMBL" id="BC164033">
    <property type="protein sequence ID" value="AAI64033.1"/>
    <property type="molecule type" value="mRNA"/>
</dbReference>
<dbReference type="RefSeq" id="NP_001001730.2">
    <property type="nucleotide sequence ID" value="NM_001001730.2"/>
</dbReference>
<dbReference type="SMR" id="Q1JPY5"/>
<dbReference type="FunCoup" id="Q1JPY5">
    <property type="interactions" value="716"/>
</dbReference>
<dbReference type="STRING" id="7955.ENSDARP00000062550"/>
<dbReference type="PaxDb" id="7955-ENSDARP00000062550"/>
<dbReference type="Ensembl" id="ENSDART00000062551">
    <property type="protein sequence ID" value="ENSDARP00000062550"/>
    <property type="gene ID" value="ENSDARG00000042641"/>
</dbReference>
<dbReference type="GeneID" id="414331"/>
<dbReference type="KEGG" id="dre:414331"/>
<dbReference type="AGR" id="ZFIN:ZDB-GENE-040625-2"/>
<dbReference type="CTD" id="13121"/>
<dbReference type="ZFIN" id="ZDB-GENE-040625-2">
    <property type="gene designation" value="cyp51"/>
</dbReference>
<dbReference type="eggNOG" id="KOG0684">
    <property type="taxonomic scope" value="Eukaryota"/>
</dbReference>
<dbReference type="HOGENOM" id="CLU_001570_15_0_1"/>
<dbReference type="InParanoid" id="Q1JPY5"/>
<dbReference type="OMA" id="HWFPFVG"/>
<dbReference type="OrthoDB" id="1055148at2759"/>
<dbReference type="PhylomeDB" id="Q1JPY5"/>
<dbReference type="TreeFam" id="TF105091"/>
<dbReference type="Reactome" id="R-DRE-191273">
    <property type="pathway name" value="Cholesterol biosynthesis"/>
</dbReference>
<dbReference type="Reactome" id="R-DRE-211976">
    <property type="pathway name" value="Endogenous sterols"/>
</dbReference>
<dbReference type="UniPathway" id="UPA00770">
    <property type="reaction ID" value="UER00754"/>
</dbReference>
<dbReference type="PRO" id="PR:Q1JPY5"/>
<dbReference type="Proteomes" id="UP000000437">
    <property type="component" value="Chromosome 19"/>
</dbReference>
<dbReference type="Bgee" id="ENSDARG00000042641">
    <property type="expression patterns" value="Expressed in zone of skin and 28 other cell types or tissues"/>
</dbReference>
<dbReference type="GO" id="GO:0005789">
    <property type="term" value="C:endoplasmic reticulum membrane"/>
    <property type="evidence" value="ECO:0007669"/>
    <property type="project" value="UniProtKB-SubCell"/>
</dbReference>
<dbReference type="GO" id="GO:0020037">
    <property type="term" value="F:heme binding"/>
    <property type="evidence" value="ECO:0007669"/>
    <property type="project" value="InterPro"/>
</dbReference>
<dbReference type="GO" id="GO:0005506">
    <property type="term" value="F:iron ion binding"/>
    <property type="evidence" value="ECO:0007669"/>
    <property type="project" value="InterPro"/>
</dbReference>
<dbReference type="GO" id="GO:0016491">
    <property type="term" value="F:oxidoreductase activity"/>
    <property type="evidence" value="ECO:0000318"/>
    <property type="project" value="GO_Central"/>
</dbReference>
<dbReference type="GO" id="GO:0008398">
    <property type="term" value="F:sterol 14-demethylase activity"/>
    <property type="evidence" value="ECO:0000314"/>
    <property type="project" value="ZFIN"/>
</dbReference>
<dbReference type="GO" id="GO:0033488">
    <property type="term" value="P:cholesterol biosynthetic process via 24,25-dihydrolanosterol"/>
    <property type="evidence" value="ECO:0000318"/>
    <property type="project" value="GO_Central"/>
</dbReference>
<dbReference type="GO" id="GO:0001878">
    <property type="term" value="P:response to yeast"/>
    <property type="evidence" value="ECO:0000314"/>
    <property type="project" value="ZFIN"/>
</dbReference>
<dbReference type="CDD" id="cd11042">
    <property type="entry name" value="CYP51-like"/>
    <property type="match status" value="1"/>
</dbReference>
<dbReference type="FunFam" id="1.10.630.10:FF:000027">
    <property type="entry name" value="lanosterol 14-alpha demethylase isoform X1"/>
    <property type="match status" value="1"/>
</dbReference>
<dbReference type="Gene3D" id="1.10.630.10">
    <property type="entry name" value="Cytochrome P450"/>
    <property type="match status" value="1"/>
</dbReference>
<dbReference type="InterPro" id="IPR050529">
    <property type="entry name" value="CYP450_sterol_14alpha_dmase"/>
</dbReference>
<dbReference type="InterPro" id="IPR001128">
    <property type="entry name" value="Cyt_P450"/>
</dbReference>
<dbReference type="InterPro" id="IPR017972">
    <property type="entry name" value="Cyt_P450_CS"/>
</dbReference>
<dbReference type="InterPro" id="IPR002403">
    <property type="entry name" value="Cyt_P450_E_grp-IV"/>
</dbReference>
<dbReference type="InterPro" id="IPR036396">
    <property type="entry name" value="Cyt_P450_sf"/>
</dbReference>
<dbReference type="PANTHER" id="PTHR24304:SF2">
    <property type="entry name" value="24-HYDROXYCHOLESTEROL 7-ALPHA-HYDROXYLASE"/>
    <property type="match status" value="1"/>
</dbReference>
<dbReference type="PANTHER" id="PTHR24304">
    <property type="entry name" value="CYTOCHROME P450 FAMILY 7"/>
    <property type="match status" value="1"/>
</dbReference>
<dbReference type="Pfam" id="PF00067">
    <property type="entry name" value="p450"/>
    <property type="match status" value="1"/>
</dbReference>
<dbReference type="PRINTS" id="PR00465">
    <property type="entry name" value="EP450IV"/>
</dbReference>
<dbReference type="PRINTS" id="PR00385">
    <property type="entry name" value="P450"/>
</dbReference>
<dbReference type="SUPFAM" id="SSF48264">
    <property type="entry name" value="Cytochrome P450"/>
    <property type="match status" value="1"/>
</dbReference>
<dbReference type="PROSITE" id="PS00086">
    <property type="entry name" value="CYTOCHROME_P450"/>
    <property type="match status" value="1"/>
</dbReference>
<gene>
    <name evidence="6 13" type="primary">cyp51</name>
</gene>
<sequence length="499" mass="57001">MTILEVGSQLIESAVLQMSLTSVLLTASVFTLTLGYFSKLLFTQHSSEHTKYPPHIPSSLPFLGQAVAFGRSPIEFLEKAYEQYGPVVSFTMVGKTFTYLLGSDAAALMFNSKNEDLNAEDVYARLTTPVFGKGVAYDVPNPLFLEQKKMLKTGLNIAQFKQHVEIIEEETKDYFRRWGESGERNLFDALSELIILTASRCLHGCEIRSLLDERVAQLYADLDGGFTHAAWLLPGWLPLPSFRRRDRAHLEIKKIFYNVIKKRREDTEKHDDILQTLIDATYKDGRPLSDDEIAGMLIGLLLAGQHTSSTTSAWMGFFLARDRALQERCYSEQKSVCGEELPPLHYDQLKDLSLLDRCLKETLRLRPPIMTMMRMAKTPQKVGEYTIPPGHQVCVSPTVNHRLQDTWAERLDFDPDRYLHDNPAAGEKFAYIPFGAGRHRCIGENFAYVQIKTIWSTLLRMFDFELVDGHFPPVNYTTMIHTPHNPIIRYTRRNTQPQQ</sequence>
<name>CYP51_DANRE</name>
<comment type="function">
    <text evidence="2 5">Sterol 14alpha-demethylase that plays a critical role in the cholesterol biosynthesis pathway, being cholesterol the major sterol component in deuterostome membranes as well as a precursor for steroid hormone synthesis (PubMed:24361620). Cytochrome P450 monooxygenase that catalyzes the three-step oxidative removal of the 14alpha-methyl group (C-32) of sterols such as lanosterol (lanosta-8,24-dien-3beta-ol) and 24,25-dihydrolanosterol (DHL) in the form of formate, and converts the sterols to 4,4-dimethyl-5alpha-cholesta-8,14,24-trien-3beta-ol and 4,4-dimethyl-8,14-cholestadien-3beta-ol, respectively, which are intermediates of cholesterol biosynthesis (PubMed:24361620). Can also demethylate substrates not intrinsic to deuterostomes, such as eburicol (24-methylene-24,25-dihydrolanosterol), but at a lower rate than DHL (By similarity).</text>
</comment>
<comment type="catalytic activity">
    <reaction evidence="5">
        <text>a 14alpha-methyl steroid + 3 reduced [NADPH--hemoprotein reductase] + 3 O2 = a Delta(14) steroid + formate + 3 oxidized [NADPH--hemoprotein reductase] + 4 H2O + 4 H(+)</text>
        <dbReference type="Rhea" id="RHEA:54028"/>
        <dbReference type="Rhea" id="RHEA-COMP:11964"/>
        <dbReference type="Rhea" id="RHEA-COMP:11965"/>
        <dbReference type="ChEBI" id="CHEBI:15377"/>
        <dbReference type="ChEBI" id="CHEBI:15378"/>
        <dbReference type="ChEBI" id="CHEBI:15379"/>
        <dbReference type="ChEBI" id="CHEBI:15740"/>
        <dbReference type="ChEBI" id="CHEBI:57618"/>
        <dbReference type="ChEBI" id="CHEBI:58210"/>
        <dbReference type="ChEBI" id="CHEBI:138029"/>
        <dbReference type="ChEBI" id="CHEBI:138031"/>
        <dbReference type="EC" id="1.14.14.154"/>
    </reaction>
    <physiologicalReaction direction="left-to-right" evidence="5">
        <dbReference type="Rhea" id="RHEA:54029"/>
    </physiologicalReaction>
</comment>
<comment type="catalytic activity">
    <reaction evidence="5">
        <text>lanosterol + 3 reduced [NADPH--hemoprotein reductase] + 3 O2 = 4,4-dimethyl-5alpha-cholesta-8,14,24-trien-3beta-ol + formate + 3 oxidized [NADPH--hemoprotein reductase] + 4 H2O + 4 H(+)</text>
        <dbReference type="Rhea" id="RHEA:25286"/>
        <dbReference type="Rhea" id="RHEA-COMP:11964"/>
        <dbReference type="Rhea" id="RHEA-COMP:11965"/>
        <dbReference type="ChEBI" id="CHEBI:15377"/>
        <dbReference type="ChEBI" id="CHEBI:15378"/>
        <dbReference type="ChEBI" id="CHEBI:15379"/>
        <dbReference type="ChEBI" id="CHEBI:15740"/>
        <dbReference type="ChEBI" id="CHEBI:16521"/>
        <dbReference type="ChEBI" id="CHEBI:17813"/>
        <dbReference type="ChEBI" id="CHEBI:57618"/>
        <dbReference type="ChEBI" id="CHEBI:58210"/>
        <dbReference type="EC" id="1.14.14.154"/>
    </reaction>
    <physiologicalReaction direction="left-to-right" evidence="5">
        <dbReference type="Rhea" id="RHEA:25287"/>
    </physiologicalReaction>
</comment>
<comment type="catalytic activity">
    <reaction evidence="2">
        <text>24,25-dihydrolanosterol + 3 reduced [NADPH--hemoprotein reductase] + 3 O2 = 4,4-dimethyl-8,14-cholestadien-3beta-ol + formate + 3 oxidized [NADPH--hemoprotein reductase] + 4 H2O + 4 H(+)</text>
        <dbReference type="Rhea" id="RHEA:45960"/>
        <dbReference type="Rhea" id="RHEA-COMP:11964"/>
        <dbReference type="Rhea" id="RHEA-COMP:11965"/>
        <dbReference type="ChEBI" id="CHEBI:15377"/>
        <dbReference type="ChEBI" id="CHEBI:15378"/>
        <dbReference type="ChEBI" id="CHEBI:15379"/>
        <dbReference type="ChEBI" id="CHEBI:15740"/>
        <dbReference type="ChEBI" id="CHEBI:28113"/>
        <dbReference type="ChEBI" id="CHEBI:57618"/>
        <dbReference type="ChEBI" id="CHEBI:58210"/>
        <dbReference type="ChEBI" id="CHEBI:78904"/>
    </reaction>
    <physiologicalReaction direction="left-to-right" evidence="2">
        <dbReference type="Rhea" id="RHEA:45961"/>
    </physiologicalReaction>
</comment>
<comment type="catalytic activity">
    <reaction evidence="8">
        <text>a 14alpha-methyl steroid + reduced [NADPH--hemoprotein reductase] + O2 = a 14alpha-hydroxymethyl steroid + oxidized [NADPH--hemoprotein reductase] + H2O + H(+)</text>
        <dbReference type="Rhea" id="RHEA:68060"/>
        <dbReference type="Rhea" id="RHEA-COMP:11964"/>
        <dbReference type="Rhea" id="RHEA-COMP:11965"/>
        <dbReference type="ChEBI" id="CHEBI:15377"/>
        <dbReference type="ChEBI" id="CHEBI:15378"/>
        <dbReference type="ChEBI" id="CHEBI:15379"/>
        <dbReference type="ChEBI" id="CHEBI:57618"/>
        <dbReference type="ChEBI" id="CHEBI:58210"/>
        <dbReference type="ChEBI" id="CHEBI:138029"/>
        <dbReference type="ChEBI" id="CHEBI:176901"/>
    </reaction>
    <physiologicalReaction direction="left-to-right" evidence="8">
        <dbReference type="Rhea" id="RHEA:68061"/>
    </physiologicalReaction>
</comment>
<comment type="catalytic activity">
    <reaction evidence="8">
        <text>a 14alpha-hydroxymethyl steroid + reduced [NADPH--hemoprotein reductase] + O2 = a 14alpha-formyl steroid + oxidized [NADPH--hemoprotein reductase] + 2 H2O + H(+)</text>
        <dbReference type="Rhea" id="RHEA:68064"/>
        <dbReference type="Rhea" id="RHEA-COMP:11964"/>
        <dbReference type="Rhea" id="RHEA-COMP:11965"/>
        <dbReference type="ChEBI" id="CHEBI:15377"/>
        <dbReference type="ChEBI" id="CHEBI:15378"/>
        <dbReference type="ChEBI" id="CHEBI:15379"/>
        <dbReference type="ChEBI" id="CHEBI:57618"/>
        <dbReference type="ChEBI" id="CHEBI:58210"/>
        <dbReference type="ChEBI" id="CHEBI:176901"/>
        <dbReference type="ChEBI" id="CHEBI:176902"/>
    </reaction>
    <physiologicalReaction direction="left-to-right" evidence="8">
        <dbReference type="Rhea" id="RHEA:68065"/>
    </physiologicalReaction>
</comment>
<comment type="catalytic activity">
    <reaction evidence="8">
        <text>a 14alpha-formyl steroid + reduced [NADPH--hemoprotein reductase] + O2 = a Delta(14) steroid + formate + oxidized [NADPH--hemoprotein reductase] + H2O + 2 H(+)</text>
        <dbReference type="Rhea" id="RHEA:68068"/>
        <dbReference type="Rhea" id="RHEA-COMP:11964"/>
        <dbReference type="Rhea" id="RHEA-COMP:11965"/>
        <dbReference type="ChEBI" id="CHEBI:15377"/>
        <dbReference type="ChEBI" id="CHEBI:15378"/>
        <dbReference type="ChEBI" id="CHEBI:15379"/>
        <dbReference type="ChEBI" id="CHEBI:15740"/>
        <dbReference type="ChEBI" id="CHEBI:57618"/>
        <dbReference type="ChEBI" id="CHEBI:58210"/>
        <dbReference type="ChEBI" id="CHEBI:138031"/>
        <dbReference type="ChEBI" id="CHEBI:176902"/>
    </reaction>
    <physiologicalReaction direction="left-to-right" evidence="8">
        <dbReference type="Rhea" id="RHEA:68069"/>
    </physiologicalReaction>
</comment>
<comment type="catalytic activity">
    <reaction evidence="8">
        <text>lanosterol + reduced [NADPH--hemoprotein reductase] + O2 = 32-hydroxylanosterol + oxidized [NADPH--hemoprotein reductase] + H2O + H(+)</text>
        <dbReference type="Rhea" id="RHEA:75103"/>
        <dbReference type="Rhea" id="RHEA-COMP:11964"/>
        <dbReference type="Rhea" id="RHEA-COMP:11965"/>
        <dbReference type="ChEBI" id="CHEBI:15377"/>
        <dbReference type="ChEBI" id="CHEBI:15378"/>
        <dbReference type="ChEBI" id="CHEBI:15379"/>
        <dbReference type="ChEBI" id="CHEBI:16521"/>
        <dbReference type="ChEBI" id="CHEBI:57618"/>
        <dbReference type="ChEBI" id="CHEBI:58210"/>
        <dbReference type="ChEBI" id="CHEBI:166806"/>
    </reaction>
    <physiologicalReaction direction="left-to-right" evidence="8">
        <dbReference type="Rhea" id="RHEA:75104"/>
    </physiologicalReaction>
</comment>
<comment type="catalytic activity">
    <reaction evidence="8">
        <text>32-hydroxylanosterol + reduced [NADPH--hemoprotein reductase] + O2 = 32-oxolanosterol + oxidized [NADPH--hemoprotein reductase] + 2 H2O + H(+)</text>
        <dbReference type="Rhea" id="RHEA:75107"/>
        <dbReference type="Rhea" id="RHEA-COMP:11964"/>
        <dbReference type="Rhea" id="RHEA-COMP:11965"/>
        <dbReference type="ChEBI" id="CHEBI:15377"/>
        <dbReference type="ChEBI" id="CHEBI:15378"/>
        <dbReference type="ChEBI" id="CHEBI:15379"/>
        <dbReference type="ChEBI" id="CHEBI:57618"/>
        <dbReference type="ChEBI" id="CHEBI:58210"/>
        <dbReference type="ChEBI" id="CHEBI:166681"/>
        <dbReference type="ChEBI" id="CHEBI:166806"/>
    </reaction>
    <physiologicalReaction direction="left-to-right" evidence="8">
        <dbReference type="Rhea" id="RHEA:75108"/>
    </physiologicalReaction>
</comment>
<comment type="catalytic activity">
    <reaction evidence="8">
        <text>32-oxolanosterol + reduced [NADPH--hemoprotein reductase] + O2 = 4,4-dimethyl-5alpha-cholesta-8,14,24-trien-3beta-ol + formate + oxidized [NADPH--hemoprotein reductase] + H2O + 2 H(+)</text>
        <dbReference type="Rhea" id="RHEA:75111"/>
        <dbReference type="Rhea" id="RHEA-COMP:11964"/>
        <dbReference type="Rhea" id="RHEA-COMP:11965"/>
        <dbReference type="ChEBI" id="CHEBI:15377"/>
        <dbReference type="ChEBI" id="CHEBI:15378"/>
        <dbReference type="ChEBI" id="CHEBI:15379"/>
        <dbReference type="ChEBI" id="CHEBI:15740"/>
        <dbReference type="ChEBI" id="CHEBI:17813"/>
        <dbReference type="ChEBI" id="CHEBI:57618"/>
        <dbReference type="ChEBI" id="CHEBI:58210"/>
        <dbReference type="ChEBI" id="CHEBI:166681"/>
    </reaction>
    <physiologicalReaction direction="left-to-right" evidence="8">
        <dbReference type="Rhea" id="RHEA:75112"/>
    </physiologicalReaction>
</comment>
<comment type="catalytic activity">
    <reaction evidence="2">
        <text>24,25-dihydrolanosterol + reduced [NADPH--hemoprotein reductase] + O2 = 32-hydroxy-24,25-dihydrolanosterol + oxidized [NADPH--hemoprotein reductase] + H2O + H(+)</text>
        <dbReference type="Rhea" id="RHEA:75079"/>
        <dbReference type="Rhea" id="RHEA-COMP:11964"/>
        <dbReference type="Rhea" id="RHEA-COMP:11965"/>
        <dbReference type="ChEBI" id="CHEBI:15377"/>
        <dbReference type="ChEBI" id="CHEBI:15378"/>
        <dbReference type="ChEBI" id="CHEBI:15379"/>
        <dbReference type="ChEBI" id="CHEBI:28113"/>
        <dbReference type="ChEBI" id="CHEBI:57618"/>
        <dbReference type="ChEBI" id="CHEBI:58210"/>
        <dbReference type="ChEBI" id="CHEBI:87057"/>
    </reaction>
    <physiologicalReaction direction="left-to-right" evidence="2">
        <dbReference type="Rhea" id="RHEA:75080"/>
    </physiologicalReaction>
</comment>
<comment type="catalytic activity">
    <reaction evidence="2">
        <text>32-hydroxy-24,25-dihydrolanosterol + reduced [NADPH--hemoprotein reductase] + O2 = 32-oxo-24,25-dihydrolanosterol + oxidized [NADPH--hemoprotein reductase] + 2 H2O + H(+)</text>
        <dbReference type="Rhea" id="RHEA:75087"/>
        <dbReference type="Rhea" id="RHEA-COMP:11964"/>
        <dbReference type="Rhea" id="RHEA-COMP:11965"/>
        <dbReference type="ChEBI" id="CHEBI:15377"/>
        <dbReference type="ChEBI" id="CHEBI:15378"/>
        <dbReference type="ChEBI" id="CHEBI:15379"/>
        <dbReference type="ChEBI" id="CHEBI:57618"/>
        <dbReference type="ChEBI" id="CHEBI:58210"/>
        <dbReference type="ChEBI" id="CHEBI:87057"/>
        <dbReference type="ChEBI" id="CHEBI:87060"/>
    </reaction>
    <physiologicalReaction direction="left-to-right" evidence="2">
        <dbReference type="Rhea" id="RHEA:75088"/>
    </physiologicalReaction>
</comment>
<comment type="catalytic activity">
    <reaction evidence="2">
        <text>32-oxo-24,25-dihydrolanosterol + reduced [NADPH--hemoprotein reductase] + O2 = 4,4-dimethyl-8,14-cholestadien-3beta-ol + formate + oxidized [NADPH--hemoprotein reductase] + H2O + 2 H(+)</text>
        <dbReference type="Rhea" id="RHEA:75083"/>
        <dbReference type="Rhea" id="RHEA-COMP:11964"/>
        <dbReference type="Rhea" id="RHEA-COMP:11965"/>
        <dbReference type="ChEBI" id="CHEBI:15377"/>
        <dbReference type="ChEBI" id="CHEBI:15378"/>
        <dbReference type="ChEBI" id="CHEBI:15379"/>
        <dbReference type="ChEBI" id="CHEBI:15740"/>
        <dbReference type="ChEBI" id="CHEBI:57618"/>
        <dbReference type="ChEBI" id="CHEBI:58210"/>
        <dbReference type="ChEBI" id="CHEBI:78904"/>
        <dbReference type="ChEBI" id="CHEBI:87060"/>
    </reaction>
    <physiologicalReaction direction="left-to-right" evidence="2">
        <dbReference type="Rhea" id="RHEA:75084"/>
    </physiologicalReaction>
</comment>
<comment type="cofactor">
    <cofactor evidence="1">
        <name>heme</name>
        <dbReference type="ChEBI" id="CHEBI:30413"/>
    </cofactor>
</comment>
<comment type="activity regulation">
    <text evidence="5">Inhibited by ketoconazole. May also be inhibited to a lesser extent by propiconazole.</text>
</comment>
<comment type="pathway">
    <text evidence="8">Steroid biosynthesis; zymosterol biosynthesis; zymosterol from lanosterol: step 1/6.</text>
</comment>
<comment type="subcellular location">
    <subcellularLocation>
        <location evidence="2">Endoplasmic reticulum membrane</location>
        <topology evidence="3">Single-pass membrane protein</topology>
    </subcellularLocation>
    <subcellularLocation>
        <location evidence="8">Membrane</location>
        <topology evidence="3">Single-pass membrane protein</topology>
    </subcellularLocation>
</comment>
<comment type="tissue specificity">
    <text evidence="5">Strongly expressed in intestine. Moderately expressed in liver, with higher levels in females compared to males. Also detected at low levels in brain, eye, kidney and testis.</text>
</comment>
<comment type="similarity">
    <text evidence="4 7">Belongs to the cytochrome P450 family.</text>
</comment>
<organism evidence="9">
    <name type="scientific">Danio rerio</name>
    <name type="common">Zebrafish</name>
    <name type="synonym">Brachydanio rerio</name>
    <dbReference type="NCBI Taxonomy" id="7955"/>
    <lineage>
        <taxon>Eukaryota</taxon>
        <taxon>Metazoa</taxon>
        <taxon>Chordata</taxon>
        <taxon>Craniata</taxon>
        <taxon>Vertebrata</taxon>
        <taxon>Euteleostomi</taxon>
        <taxon>Actinopterygii</taxon>
        <taxon>Neopterygii</taxon>
        <taxon>Teleostei</taxon>
        <taxon>Ostariophysi</taxon>
        <taxon>Cypriniformes</taxon>
        <taxon>Danionidae</taxon>
        <taxon>Danioninae</taxon>
        <taxon>Danio</taxon>
    </lineage>
</organism>
<proteinExistence type="evidence at protein level"/>
<accession>Q1JPY5</accession>
<accession>Q6RIA7</accession>
<evidence type="ECO:0000250" key="1">
    <source>
        <dbReference type="UniProtKB" id="Q16850"/>
    </source>
</evidence>
<evidence type="ECO:0000250" key="2">
    <source>
        <dbReference type="UniProtKB" id="Q64654"/>
    </source>
</evidence>
<evidence type="ECO:0000255" key="3"/>
<evidence type="ECO:0000255" key="4">
    <source>
        <dbReference type="RuleBase" id="RU000461"/>
    </source>
</evidence>
<evidence type="ECO:0000269" key="5">
    <source>
    </source>
</evidence>
<evidence type="ECO:0000303" key="6">
    <source>
    </source>
</evidence>
<evidence type="ECO:0000305" key="7"/>
<evidence type="ECO:0000305" key="8">
    <source>
    </source>
</evidence>
<evidence type="ECO:0000312" key="9">
    <source>
        <dbReference type="EMBL" id="AAI16553.1"/>
    </source>
</evidence>
<evidence type="ECO:0000312" key="10">
    <source>
        <dbReference type="EMBL" id="AAI64033.1"/>
    </source>
</evidence>
<evidence type="ECO:0000312" key="11">
    <source>
        <dbReference type="EMBL" id="AAR89625.1"/>
    </source>
</evidence>
<evidence type="ECO:0000312" key="12">
    <source>
        <dbReference type="Proteomes" id="UP000000437"/>
    </source>
</evidence>
<evidence type="ECO:0000312" key="13">
    <source>
        <dbReference type="ZFIN" id="ZDB-GENE-040625-2"/>
    </source>
</evidence>
<reference evidence="11" key="1">
    <citation type="journal article" date="2014" name="Biochim. Biophys. Acta">
        <title>Identification, modeling and ligand affinity of early deuterostome CYP51s, and functional characterization of recombinant zebrafish sterol 14alpha-demethylase.</title>
        <authorList>
            <person name="Morrison A.M."/>
            <person name="Goldstone J.V."/>
            <person name="Lamb D.C."/>
            <person name="Kubota A."/>
            <person name="Lemaire B."/>
            <person name="Stegeman J.J."/>
        </authorList>
    </citation>
    <scope>NUCLEOTIDE SEQUENCE [MRNA]</scope>
    <scope>FUNCTION</scope>
    <scope>CATALYTIC ACTIVITY</scope>
    <scope>ACTIVITY REGULATION</scope>
    <scope>SUBCELLULAR LOCATION</scope>
    <scope>TISSUE SPECIFICITY</scope>
</reference>
<reference evidence="12" key="2">
    <citation type="journal article" date="2013" name="Nature">
        <title>The zebrafish reference genome sequence and its relationship to the human genome.</title>
        <authorList>
            <person name="Howe K."/>
            <person name="Clark M.D."/>
            <person name="Torroja C.F."/>
            <person name="Torrance J."/>
            <person name="Berthelot C."/>
            <person name="Muffato M."/>
            <person name="Collins J.E."/>
            <person name="Humphray S."/>
            <person name="McLaren K."/>
            <person name="Matthews L."/>
            <person name="McLaren S."/>
            <person name="Sealy I."/>
            <person name="Caccamo M."/>
            <person name="Churcher C."/>
            <person name="Scott C."/>
            <person name="Barrett J.C."/>
            <person name="Koch R."/>
            <person name="Rauch G.J."/>
            <person name="White S."/>
            <person name="Chow W."/>
            <person name="Kilian B."/>
            <person name="Quintais L.T."/>
            <person name="Guerra-Assuncao J.A."/>
            <person name="Zhou Y."/>
            <person name="Gu Y."/>
            <person name="Yen J."/>
            <person name="Vogel J.H."/>
            <person name="Eyre T."/>
            <person name="Redmond S."/>
            <person name="Banerjee R."/>
            <person name="Chi J."/>
            <person name="Fu B."/>
            <person name="Langley E."/>
            <person name="Maguire S.F."/>
            <person name="Laird G.K."/>
            <person name="Lloyd D."/>
            <person name="Kenyon E."/>
            <person name="Donaldson S."/>
            <person name="Sehra H."/>
            <person name="Almeida-King J."/>
            <person name="Loveland J."/>
            <person name="Trevanion S."/>
            <person name="Jones M."/>
            <person name="Quail M."/>
            <person name="Willey D."/>
            <person name="Hunt A."/>
            <person name="Burton J."/>
            <person name="Sims S."/>
            <person name="McLay K."/>
            <person name="Plumb B."/>
            <person name="Davis J."/>
            <person name="Clee C."/>
            <person name="Oliver K."/>
            <person name="Clark R."/>
            <person name="Riddle C."/>
            <person name="Elliot D."/>
            <person name="Threadgold G."/>
            <person name="Harden G."/>
            <person name="Ware D."/>
            <person name="Begum S."/>
            <person name="Mortimore B."/>
            <person name="Kerry G."/>
            <person name="Heath P."/>
            <person name="Phillimore B."/>
            <person name="Tracey A."/>
            <person name="Corby N."/>
            <person name="Dunn M."/>
            <person name="Johnson C."/>
            <person name="Wood J."/>
            <person name="Clark S."/>
            <person name="Pelan S."/>
            <person name="Griffiths G."/>
            <person name="Smith M."/>
            <person name="Glithero R."/>
            <person name="Howden P."/>
            <person name="Barker N."/>
            <person name="Lloyd C."/>
            <person name="Stevens C."/>
            <person name="Harley J."/>
            <person name="Holt K."/>
            <person name="Panagiotidis G."/>
            <person name="Lovell J."/>
            <person name="Beasley H."/>
            <person name="Henderson C."/>
            <person name="Gordon D."/>
            <person name="Auger K."/>
            <person name="Wright D."/>
            <person name="Collins J."/>
            <person name="Raisen C."/>
            <person name="Dyer L."/>
            <person name="Leung K."/>
            <person name="Robertson L."/>
            <person name="Ambridge K."/>
            <person name="Leongamornlert D."/>
            <person name="McGuire S."/>
            <person name="Gilderthorp R."/>
            <person name="Griffiths C."/>
            <person name="Manthravadi D."/>
            <person name="Nichol S."/>
            <person name="Barker G."/>
            <person name="Whitehead S."/>
            <person name="Kay M."/>
            <person name="Brown J."/>
            <person name="Murnane C."/>
            <person name="Gray E."/>
            <person name="Humphries M."/>
            <person name="Sycamore N."/>
            <person name="Barker D."/>
            <person name="Saunders D."/>
            <person name="Wallis J."/>
            <person name="Babbage A."/>
            <person name="Hammond S."/>
            <person name="Mashreghi-Mohammadi M."/>
            <person name="Barr L."/>
            <person name="Martin S."/>
            <person name="Wray P."/>
            <person name="Ellington A."/>
            <person name="Matthews N."/>
            <person name="Ellwood M."/>
            <person name="Woodmansey R."/>
            <person name="Clark G."/>
            <person name="Cooper J."/>
            <person name="Tromans A."/>
            <person name="Grafham D."/>
            <person name="Skuce C."/>
            <person name="Pandian R."/>
            <person name="Andrews R."/>
            <person name="Harrison E."/>
            <person name="Kimberley A."/>
            <person name="Garnett J."/>
            <person name="Fosker N."/>
            <person name="Hall R."/>
            <person name="Garner P."/>
            <person name="Kelly D."/>
            <person name="Bird C."/>
            <person name="Palmer S."/>
            <person name="Gehring I."/>
            <person name="Berger A."/>
            <person name="Dooley C.M."/>
            <person name="Ersan-Urun Z."/>
            <person name="Eser C."/>
            <person name="Geiger H."/>
            <person name="Geisler M."/>
            <person name="Karotki L."/>
            <person name="Kirn A."/>
            <person name="Konantz J."/>
            <person name="Konantz M."/>
            <person name="Oberlander M."/>
            <person name="Rudolph-Geiger S."/>
            <person name="Teucke M."/>
            <person name="Lanz C."/>
            <person name="Raddatz G."/>
            <person name="Osoegawa K."/>
            <person name="Zhu B."/>
            <person name="Rapp A."/>
            <person name="Widaa S."/>
            <person name="Langford C."/>
            <person name="Yang F."/>
            <person name="Schuster S.C."/>
            <person name="Carter N.P."/>
            <person name="Harrow J."/>
            <person name="Ning Z."/>
            <person name="Herrero J."/>
            <person name="Searle S.M."/>
            <person name="Enright A."/>
            <person name="Geisler R."/>
            <person name="Plasterk R.H."/>
            <person name="Lee C."/>
            <person name="Westerfield M."/>
            <person name="de Jong P.J."/>
            <person name="Zon L.I."/>
            <person name="Postlethwait J.H."/>
            <person name="Nusslein-Volhard C."/>
            <person name="Hubbard T.J."/>
            <person name="Roest Crollius H."/>
            <person name="Rogers J."/>
            <person name="Stemple D.L."/>
        </authorList>
    </citation>
    <scope>NUCLEOTIDE SEQUENCE [LARGE SCALE GENOMIC DNA]</scope>
    <source>
        <strain evidence="12">Tuebingen</strain>
    </source>
</reference>
<reference evidence="9 10" key="3">
    <citation type="submission" date="2008-04" db="EMBL/GenBank/DDBJ databases">
        <authorList>
            <consortium name="NIH - Zebrafish Gene Collection (ZGC) project"/>
        </authorList>
    </citation>
    <scope>NUCLEOTIDE SEQUENCE [LARGE SCALE MRNA]</scope>
    <source>
        <tissue evidence="9">Eye</tissue>
    </source>
</reference>
<feature type="chain" id="PRO_0000439597" description="Lanosterol 14-alpha demethylase">
    <location>
        <begin position="1"/>
        <end position="499"/>
    </location>
</feature>
<feature type="transmembrane region" description="Helical" evidence="3">
    <location>
        <begin position="13"/>
        <end position="35"/>
    </location>
</feature>
<feature type="binding site" description="axial binding residue" evidence="1">
    <location>
        <position position="441"/>
    </location>
    <ligand>
        <name>heme</name>
        <dbReference type="ChEBI" id="CHEBI:30413"/>
    </ligand>
    <ligandPart>
        <name>Fe</name>
        <dbReference type="ChEBI" id="CHEBI:18248"/>
    </ligandPart>
</feature>
<feature type="sequence conflict" description="In Ref. 1; AAR89625." evidence="7" ref="1">
    <original>F</original>
    <variation>I</variation>
    <location>
        <position position="37"/>
    </location>
</feature>
<feature type="sequence conflict" description="In Ref. 1; AAR89625." evidence="7" ref="1">
    <original>T</original>
    <variation>A</variation>
    <location>
        <position position="495"/>
    </location>
</feature>